<feature type="chain" id="PRO_1000196541" description="Small ribosomal subunit protein uS19">
    <location>
        <begin position="1"/>
        <end position="94"/>
    </location>
</feature>
<dbReference type="EMBL" id="CP001472">
    <property type="protein sequence ID" value="ACO32656.1"/>
    <property type="molecule type" value="Genomic_DNA"/>
</dbReference>
<dbReference type="RefSeq" id="WP_015896580.1">
    <property type="nucleotide sequence ID" value="NC_012483.1"/>
</dbReference>
<dbReference type="SMR" id="C1F638"/>
<dbReference type="FunCoup" id="C1F638">
    <property type="interactions" value="534"/>
</dbReference>
<dbReference type="STRING" id="240015.ACP_1447"/>
<dbReference type="KEGG" id="aca:ACP_1447"/>
<dbReference type="eggNOG" id="COG0185">
    <property type="taxonomic scope" value="Bacteria"/>
</dbReference>
<dbReference type="HOGENOM" id="CLU_144911_0_1_0"/>
<dbReference type="InParanoid" id="C1F638"/>
<dbReference type="OrthoDB" id="9797833at2"/>
<dbReference type="Proteomes" id="UP000002207">
    <property type="component" value="Chromosome"/>
</dbReference>
<dbReference type="GO" id="GO:0005737">
    <property type="term" value="C:cytoplasm"/>
    <property type="evidence" value="ECO:0007669"/>
    <property type="project" value="UniProtKB-ARBA"/>
</dbReference>
<dbReference type="GO" id="GO:0015935">
    <property type="term" value="C:small ribosomal subunit"/>
    <property type="evidence" value="ECO:0007669"/>
    <property type="project" value="InterPro"/>
</dbReference>
<dbReference type="GO" id="GO:0019843">
    <property type="term" value="F:rRNA binding"/>
    <property type="evidence" value="ECO:0007669"/>
    <property type="project" value="UniProtKB-UniRule"/>
</dbReference>
<dbReference type="GO" id="GO:0003735">
    <property type="term" value="F:structural constituent of ribosome"/>
    <property type="evidence" value="ECO:0007669"/>
    <property type="project" value="InterPro"/>
</dbReference>
<dbReference type="GO" id="GO:0000028">
    <property type="term" value="P:ribosomal small subunit assembly"/>
    <property type="evidence" value="ECO:0007669"/>
    <property type="project" value="TreeGrafter"/>
</dbReference>
<dbReference type="GO" id="GO:0006412">
    <property type="term" value="P:translation"/>
    <property type="evidence" value="ECO:0007669"/>
    <property type="project" value="UniProtKB-UniRule"/>
</dbReference>
<dbReference type="FunFam" id="3.30.860.10:FF:000001">
    <property type="entry name" value="30S ribosomal protein S19"/>
    <property type="match status" value="1"/>
</dbReference>
<dbReference type="Gene3D" id="3.30.860.10">
    <property type="entry name" value="30s Ribosomal Protein S19, Chain A"/>
    <property type="match status" value="1"/>
</dbReference>
<dbReference type="HAMAP" id="MF_00531">
    <property type="entry name" value="Ribosomal_uS19"/>
    <property type="match status" value="1"/>
</dbReference>
<dbReference type="InterPro" id="IPR002222">
    <property type="entry name" value="Ribosomal_uS19"/>
</dbReference>
<dbReference type="InterPro" id="IPR005732">
    <property type="entry name" value="Ribosomal_uS19_bac-type"/>
</dbReference>
<dbReference type="InterPro" id="IPR020934">
    <property type="entry name" value="Ribosomal_uS19_CS"/>
</dbReference>
<dbReference type="InterPro" id="IPR023575">
    <property type="entry name" value="Ribosomal_uS19_SF"/>
</dbReference>
<dbReference type="NCBIfam" id="TIGR01050">
    <property type="entry name" value="rpsS_bact"/>
    <property type="match status" value="1"/>
</dbReference>
<dbReference type="PANTHER" id="PTHR11880">
    <property type="entry name" value="RIBOSOMAL PROTEIN S19P FAMILY MEMBER"/>
    <property type="match status" value="1"/>
</dbReference>
<dbReference type="PANTHER" id="PTHR11880:SF8">
    <property type="entry name" value="SMALL RIBOSOMAL SUBUNIT PROTEIN US19M"/>
    <property type="match status" value="1"/>
</dbReference>
<dbReference type="Pfam" id="PF00203">
    <property type="entry name" value="Ribosomal_S19"/>
    <property type="match status" value="1"/>
</dbReference>
<dbReference type="PIRSF" id="PIRSF002144">
    <property type="entry name" value="Ribosomal_S19"/>
    <property type="match status" value="1"/>
</dbReference>
<dbReference type="PRINTS" id="PR00975">
    <property type="entry name" value="RIBOSOMALS19"/>
</dbReference>
<dbReference type="SUPFAM" id="SSF54570">
    <property type="entry name" value="Ribosomal protein S19"/>
    <property type="match status" value="1"/>
</dbReference>
<dbReference type="PROSITE" id="PS00323">
    <property type="entry name" value="RIBOSOMAL_S19"/>
    <property type="match status" value="1"/>
</dbReference>
<gene>
    <name evidence="1" type="primary">rpsS</name>
    <name type="ordered locus">ACP_1447</name>
</gene>
<evidence type="ECO:0000255" key="1">
    <source>
        <dbReference type="HAMAP-Rule" id="MF_00531"/>
    </source>
</evidence>
<evidence type="ECO:0000305" key="2"/>
<keyword id="KW-1185">Reference proteome</keyword>
<keyword id="KW-0687">Ribonucleoprotein</keyword>
<keyword id="KW-0689">Ribosomal protein</keyword>
<keyword id="KW-0694">RNA-binding</keyword>
<keyword id="KW-0699">rRNA-binding</keyword>
<proteinExistence type="inferred from homology"/>
<reference key="1">
    <citation type="journal article" date="2009" name="Appl. Environ. Microbiol.">
        <title>Three genomes from the phylum Acidobacteria provide insight into the lifestyles of these microorganisms in soils.</title>
        <authorList>
            <person name="Ward N.L."/>
            <person name="Challacombe J.F."/>
            <person name="Janssen P.H."/>
            <person name="Henrissat B."/>
            <person name="Coutinho P.M."/>
            <person name="Wu M."/>
            <person name="Xie G."/>
            <person name="Haft D.H."/>
            <person name="Sait M."/>
            <person name="Badger J."/>
            <person name="Barabote R.D."/>
            <person name="Bradley B."/>
            <person name="Brettin T.S."/>
            <person name="Brinkac L.M."/>
            <person name="Bruce D."/>
            <person name="Creasy T."/>
            <person name="Daugherty S.C."/>
            <person name="Davidsen T.M."/>
            <person name="DeBoy R.T."/>
            <person name="Detter J.C."/>
            <person name="Dodson R.J."/>
            <person name="Durkin A.S."/>
            <person name="Ganapathy A."/>
            <person name="Gwinn-Giglio M."/>
            <person name="Han C.S."/>
            <person name="Khouri H."/>
            <person name="Kiss H."/>
            <person name="Kothari S.P."/>
            <person name="Madupu R."/>
            <person name="Nelson K.E."/>
            <person name="Nelson W.C."/>
            <person name="Paulsen I."/>
            <person name="Penn K."/>
            <person name="Ren Q."/>
            <person name="Rosovitz M.J."/>
            <person name="Selengut J.D."/>
            <person name="Shrivastava S."/>
            <person name="Sullivan S.A."/>
            <person name="Tapia R."/>
            <person name="Thompson L.S."/>
            <person name="Watkins K.L."/>
            <person name="Yang Q."/>
            <person name="Yu C."/>
            <person name="Zafar N."/>
            <person name="Zhou L."/>
            <person name="Kuske C.R."/>
        </authorList>
    </citation>
    <scope>NUCLEOTIDE SEQUENCE [LARGE SCALE GENOMIC DNA]</scope>
    <source>
        <strain>ATCC 51196 / DSM 11244 / BCRC 80197 / JCM 7670 / NBRC 15755 / NCIMB 13165 / 161</strain>
    </source>
</reference>
<sequence length="94" mass="10529">MARSTKKGPFIDGHLMVKIEAMNQANDRKVVRTWSRRSTVHPDMVGHTIAVHNGKKFVPVYVTENMVGHKLGEFAPTRTFKGHAAKTESSSRAR</sequence>
<comment type="function">
    <text evidence="1">Protein S19 forms a complex with S13 that binds strongly to the 16S ribosomal RNA.</text>
</comment>
<comment type="similarity">
    <text evidence="1">Belongs to the universal ribosomal protein uS19 family.</text>
</comment>
<protein>
    <recommendedName>
        <fullName evidence="1">Small ribosomal subunit protein uS19</fullName>
    </recommendedName>
    <alternativeName>
        <fullName evidence="2">30S ribosomal protein S19</fullName>
    </alternativeName>
</protein>
<name>RS19_ACIC5</name>
<accession>C1F638</accession>
<organism>
    <name type="scientific">Acidobacterium capsulatum (strain ATCC 51196 / DSM 11244 / BCRC 80197 / JCM 7670 / NBRC 15755 / NCIMB 13165 / 161)</name>
    <dbReference type="NCBI Taxonomy" id="240015"/>
    <lineage>
        <taxon>Bacteria</taxon>
        <taxon>Pseudomonadati</taxon>
        <taxon>Acidobacteriota</taxon>
        <taxon>Terriglobia</taxon>
        <taxon>Terriglobales</taxon>
        <taxon>Acidobacteriaceae</taxon>
        <taxon>Acidobacterium</taxon>
    </lineage>
</organism>